<protein>
    <recommendedName>
        <fullName evidence="1">Large ribosomal subunit protein bL17</fullName>
    </recommendedName>
    <alternativeName>
        <fullName evidence="2">50S ribosomal protein L17</fullName>
    </alternativeName>
</protein>
<accession>A3PGN6</accession>
<gene>
    <name evidence="1" type="primary">rplQ</name>
    <name type="ordered locus">Rsph17029_0386</name>
</gene>
<evidence type="ECO:0000255" key="1">
    <source>
        <dbReference type="HAMAP-Rule" id="MF_01368"/>
    </source>
</evidence>
<evidence type="ECO:0000305" key="2"/>
<feature type="chain" id="PRO_1000055927" description="Large ribosomal subunit protein bL17">
    <location>
        <begin position="1"/>
        <end position="139"/>
    </location>
</feature>
<sequence>MRHARGYRRLNRTHEHRKALFANMAGSLIEHEQIKTTLPKAKELRPIIEKLITLAKRGDLHARRQAAAQLKEDRHVARLFEILGPRYAERAGGYVRVLKAGFRYGDMAPMAIIEFVDRDPNAKGAADKARTAAEEALEE</sequence>
<keyword id="KW-0687">Ribonucleoprotein</keyword>
<keyword id="KW-0689">Ribosomal protein</keyword>
<dbReference type="EMBL" id="CP000577">
    <property type="protein sequence ID" value="ABN75502.1"/>
    <property type="molecule type" value="Genomic_DNA"/>
</dbReference>
<dbReference type="RefSeq" id="WP_002722538.1">
    <property type="nucleotide sequence ID" value="NC_009049.1"/>
</dbReference>
<dbReference type="SMR" id="A3PGN6"/>
<dbReference type="GeneID" id="67445525"/>
<dbReference type="KEGG" id="rsh:Rsph17029_0386"/>
<dbReference type="HOGENOM" id="CLU_074407_2_0_5"/>
<dbReference type="GO" id="GO:0022625">
    <property type="term" value="C:cytosolic large ribosomal subunit"/>
    <property type="evidence" value="ECO:0007669"/>
    <property type="project" value="TreeGrafter"/>
</dbReference>
<dbReference type="GO" id="GO:0003735">
    <property type="term" value="F:structural constituent of ribosome"/>
    <property type="evidence" value="ECO:0007669"/>
    <property type="project" value="InterPro"/>
</dbReference>
<dbReference type="GO" id="GO:0006412">
    <property type="term" value="P:translation"/>
    <property type="evidence" value="ECO:0007669"/>
    <property type="project" value="UniProtKB-UniRule"/>
</dbReference>
<dbReference type="FunFam" id="3.90.1030.10:FF:000001">
    <property type="entry name" value="50S ribosomal protein L17"/>
    <property type="match status" value="1"/>
</dbReference>
<dbReference type="Gene3D" id="3.90.1030.10">
    <property type="entry name" value="Ribosomal protein L17"/>
    <property type="match status" value="1"/>
</dbReference>
<dbReference type="HAMAP" id="MF_01368">
    <property type="entry name" value="Ribosomal_bL17"/>
    <property type="match status" value="1"/>
</dbReference>
<dbReference type="InterPro" id="IPR000456">
    <property type="entry name" value="Ribosomal_bL17"/>
</dbReference>
<dbReference type="InterPro" id="IPR047859">
    <property type="entry name" value="Ribosomal_bL17_CS"/>
</dbReference>
<dbReference type="InterPro" id="IPR036373">
    <property type="entry name" value="Ribosomal_bL17_sf"/>
</dbReference>
<dbReference type="NCBIfam" id="TIGR00059">
    <property type="entry name" value="L17"/>
    <property type="match status" value="1"/>
</dbReference>
<dbReference type="PANTHER" id="PTHR14413:SF16">
    <property type="entry name" value="LARGE RIBOSOMAL SUBUNIT PROTEIN BL17M"/>
    <property type="match status" value="1"/>
</dbReference>
<dbReference type="PANTHER" id="PTHR14413">
    <property type="entry name" value="RIBOSOMAL PROTEIN L17"/>
    <property type="match status" value="1"/>
</dbReference>
<dbReference type="Pfam" id="PF01196">
    <property type="entry name" value="Ribosomal_L17"/>
    <property type="match status" value="1"/>
</dbReference>
<dbReference type="SUPFAM" id="SSF64263">
    <property type="entry name" value="Prokaryotic ribosomal protein L17"/>
    <property type="match status" value="1"/>
</dbReference>
<dbReference type="PROSITE" id="PS01167">
    <property type="entry name" value="RIBOSOMAL_L17"/>
    <property type="match status" value="1"/>
</dbReference>
<organism>
    <name type="scientific">Cereibacter sphaeroides (strain ATCC 17029 / ATH 2.4.9)</name>
    <name type="common">Rhodobacter sphaeroides</name>
    <dbReference type="NCBI Taxonomy" id="349101"/>
    <lineage>
        <taxon>Bacteria</taxon>
        <taxon>Pseudomonadati</taxon>
        <taxon>Pseudomonadota</taxon>
        <taxon>Alphaproteobacteria</taxon>
        <taxon>Rhodobacterales</taxon>
        <taxon>Paracoccaceae</taxon>
        <taxon>Cereibacter</taxon>
    </lineage>
</organism>
<comment type="subunit">
    <text evidence="1">Part of the 50S ribosomal subunit. Contacts protein L32.</text>
</comment>
<comment type="similarity">
    <text evidence="1">Belongs to the bacterial ribosomal protein bL17 family.</text>
</comment>
<reference key="1">
    <citation type="submission" date="2007-02" db="EMBL/GenBank/DDBJ databases">
        <title>Complete sequence of chromosome 1 of Rhodobacter sphaeroides ATCC 17029.</title>
        <authorList>
            <person name="Copeland A."/>
            <person name="Lucas S."/>
            <person name="Lapidus A."/>
            <person name="Barry K."/>
            <person name="Detter J.C."/>
            <person name="Glavina del Rio T."/>
            <person name="Hammon N."/>
            <person name="Israni S."/>
            <person name="Dalin E."/>
            <person name="Tice H."/>
            <person name="Pitluck S."/>
            <person name="Kiss H."/>
            <person name="Brettin T."/>
            <person name="Bruce D."/>
            <person name="Han C."/>
            <person name="Tapia R."/>
            <person name="Gilna P."/>
            <person name="Schmutz J."/>
            <person name="Larimer F."/>
            <person name="Land M."/>
            <person name="Hauser L."/>
            <person name="Kyrpides N."/>
            <person name="Mikhailova N."/>
            <person name="Richardson P."/>
            <person name="Mackenzie C."/>
            <person name="Choudhary M."/>
            <person name="Donohue T.J."/>
            <person name="Kaplan S."/>
        </authorList>
    </citation>
    <scope>NUCLEOTIDE SEQUENCE [LARGE SCALE GENOMIC DNA]</scope>
    <source>
        <strain>ATCC 17029 / ATH 2.4.9</strain>
    </source>
</reference>
<proteinExistence type="inferred from homology"/>
<name>RL17_CERS1</name>